<organism>
    <name type="scientific">Pseudomonas syringae pv. tomato (strain ATCC BAA-871 / DC3000)</name>
    <dbReference type="NCBI Taxonomy" id="223283"/>
    <lineage>
        <taxon>Bacteria</taxon>
        <taxon>Pseudomonadati</taxon>
        <taxon>Pseudomonadota</taxon>
        <taxon>Gammaproteobacteria</taxon>
        <taxon>Pseudomonadales</taxon>
        <taxon>Pseudomonadaceae</taxon>
        <taxon>Pseudomonas</taxon>
    </lineage>
</organism>
<name>FADA_PSESM</name>
<accession>Q87ZB3</accession>
<proteinExistence type="inferred from homology"/>
<gene>
    <name evidence="1" type="primary">fadA</name>
    <name type="ordered locus">PSPTO_3516</name>
</gene>
<comment type="function">
    <text evidence="1">Catalyzes the final step of fatty acid oxidation in which acetyl-CoA is released and the CoA ester of a fatty acid two carbons shorter is formed.</text>
</comment>
<comment type="catalytic activity">
    <reaction evidence="1">
        <text>an acyl-CoA + acetyl-CoA = a 3-oxoacyl-CoA + CoA</text>
        <dbReference type="Rhea" id="RHEA:21564"/>
        <dbReference type="ChEBI" id="CHEBI:57287"/>
        <dbReference type="ChEBI" id="CHEBI:57288"/>
        <dbReference type="ChEBI" id="CHEBI:58342"/>
        <dbReference type="ChEBI" id="CHEBI:90726"/>
        <dbReference type="EC" id="2.3.1.16"/>
    </reaction>
</comment>
<comment type="pathway">
    <text evidence="1">Lipid metabolism; fatty acid beta-oxidation.</text>
</comment>
<comment type="subunit">
    <text evidence="1">Heterotetramer of two alpha chains (FadB) and two beta chains (FadA).</text>
</comment>
<comment type="subcellular location">
    <subcellularLocation>
        <location evidence="1">Cytoplasm</location>
    </subcellularLocation>
</comment>
<comment type="similarity">
    <text evidence="1">Belongs to the thiolase-like superfamily. Thiolase family.</text>
</comment>
<protein>
    <recommendedName>
        <fullName evidence="1">3-ketoacyl-CoA thiolase</fullName>
        <ecNumber evidence="1">2.3.1.16</ecNumber>
    </recommendedName>
    <alternativeName>
        <fullName evidence="1">Acetyl-CoA acyltransferase</fullName>
    </alternativeName>
    <alternativeName>
        <fullName evidence="1">Beta-ketothiolase</fullName>
    </alternativeName>
    <alternativeName>
        <fullName evidence="1">Fatty acid oxidation complex subunit beta</fullName>
    </alternativeName>
</protein>
<sequence length="391" mass="41720">MSLNPRDVVIVDFGRTPMGRSKGGMHRNTRAEDMSAHLISKLLERNNKVDPAEVEDVIWGCVNQTLEQGWNIARMASLLTQIPHTSAAQTVSRLCGSSMSALHTAAQAIMTNNGDVFVIGGVEHMGHVSMMHGVDPNPHMSLHAAKASGMMGLTAEMLGKMHGITREQQDAFGLRSHQLAHKATLEGKFKDEIIPMQGYDENGFLRVFDYDETIRPDTTLESLAALKPAFNPKGGTVTAGTSSQITDGASCMIVMSAQRAQDLGIQPLAVIRSMAVAGVDPAIMGYGPVPATQKALKRAGLSISDIDFFELNEAFAAQALPVLKDLKVLDKMNEKVNLHGGAIALGHPFGCSGARISGTLLNVMKQNGGTFGVSTMCIGLGQGIATVFERV</sequence>
<reference key="1">
    <citation type="journal article" date="2003" name="Proc. Natl. Acad. Sci. U.S.A.">
        <title>The complete genome sequence of the Arabidopsis and tomato pathogen Pseudomonas syringae pv. tomato DC3000.</title>
        <authorList>
            <person name="Buell C.R."/>
            <person name="Joardar V."/>
            <person name="Lindeberg M."/>
            <person name="Selengut J."/>
            <person name="Paulsen I.T."/>
            <person name="Gwinn M.L."/>
            <person name="Dodson R.J."/>
            <person name="DeBoy R.T."/>
            <person name="Durkin A.S."/>
            <person name="Kolonay J.F."/>
            <person name="Madupu R."/>
            <person name="Daugherty S.C."/>
            <person name="Brinkac L.M."/>
            <person name="Beanan M.J."/>
            <person name="Haft D.H."/>
            <person name="Nelson W.C."/>
            <person name="Davidsen T.M."/>
            <person name="Zafar N."/>
            <person name="Zhou L."/>
            <person name="Liu J."/>
            <person name="Yuan Q."/>
            <person name="Khouri H.M."/>
            <person name="Fedorova N.B."/>
            <person name="Tran B."/>
            <person name="Russell D."/>
            <person name="Berry K.J."/>
            <person name="Utterback T.R."/>
            <person name="Van Aken S.E."/>
            <person name="Feldblyum T.V."/>
            <person name="D'Ascenzo M."/>
            <person name="Deng W.-L."/>
            <person name="Ramos A.R."/>
            <person name="Alfano J.R."/>
            <person name="Cartinhour S."/>
            <person name="Chatterjee A.K."/>
            <person name="Delaney T.P."/>
            <person name="Lazarowitz S.G."/>
            <person name="Martin G.B."/>
            <person name="Schneider D.J."/>
            <person name="Tang X."/>
            <person name="Bender C.L."/>
            <person name="White O."/>
            <person name="Fraser C.M."/>
            <person name="Collmer A."/>
        </authorList>
    </citation>
    <scope>NUCLEOTIDE SEQUENCE [LARGE SCALE GENOMIC DNA]</scope>
    <source>
        <strain>ATCC BAA-871 / DC3000</strain>
    </source>
</reference>
<keyword id="KW-0012">Acyltransferase</keyword>
<keyword id="KW-0963">Cytoplasm</keyword>
<keyword id="KW-0276">Fatty acid metabolism</keyword>
<keyword id="KW-0442">Lipid degradation</keyword>
<keyword id="KW-0443">Lipid metabolism</keyword>
<keyword id="KW-1185">Reference proteome</keyword>
<keyword id="KW-0808">Transferase</keyword>
<feature type="chain" id="PRO_0000206386" description="3-ketoacyl-CoA thiolase">
    <location>
        <begin position="1"/>
        <end position="391"/>
    </location>
</feature>
<feature type="active site" description="Acyl-thioester intermediate" evidence="1">
    <location>
        <position position="95"/>
    </location>
</feature>
<feature type="active site" description="Proton acceptor" evidence="1">
    <location>
        <position position="347"/>
    </location>
</feature>
<feature type="active site" description="Proton acceptor" evidence="1">
    <location>
        <position position="377"/>
    </location>
</feature>
<dbReference type="EC" id="2.3.1.16" evidence="1"/>
<dbReference type="EMBL" id="AE016853">
    <property type="protein sequence ID" value="AAO56991.1"/>
    <property type="molecule type" value="Genomic_DNA"/>
</dbReference>
<dbReference type="RefSeq" id="NP_793296.1">
    <property type="nucleotide sequence ID" value="NC_004578.1"/>
</dbReference>
<dbReference type="RefSeq" id="WP_007245350.1">
    <property type="nucleotide sequence ID" value="NC_004578.1"/>
</dbReference>
<dbReference type="SMR" id="Q87ZB3"/>
<dbReference type="STRING" id="223283.PSPTO_3516"/>
<dbReference type="GeneID" id="1185181"/>
<dbReference type="KEGG" id="pst:PSPTO_3516"/>
<dbReference type="PATRIC" id="fig|223283.9.peg.3601"/>
<dbReference type="eggNOG" id="COG0183">
    <property type="taxonomic scope" value="Bacteria"/>
</dbReference>
<dbReference type="HOGENOM" id="CLU_031026_2_2_6"/>
<dbReference type="OrthoDB" id="8951704at2"/>
<dbReference type="PhylomeDB" id="Q87ZB3"/>
<dbReference type="UniPathway" id="UPA00659"/>
<dbReference type="Proteomes" id="UP000002515">
    <property type="component" value="Chromosome"/>
</dbReference>
<dbReference type="GO" id="GO:0005737">
    <property type="term" value="C:cytoplasm"/>
    <property type="evidence" value="ECO:0007669"/>
    <property type="project" value="UniProtKB-SubCell"/>
</dbReference>
<dbReference type="GO" id="GO:0003988">
    <property type="term" value="F:acetyl-CoA C-acyltransferase activity"/>
    <property type="evidence" value="ECO:0007669"/>
    <property type="project" value="UniProtKB-UniRule"/>
</dbReference>
<dbReference type="GO" id="GO:0006635">
    <property type="term" value="P:fatty acid beta-oxidation"/>
    <property type="evidence" value="ECO:0007669"/>
    <property type="project" value="UniProtKB-UniRule"/>
</dbReference>
<dbReference type="GO" id="GO:0010124">
    <property type="term" value="P:phenylacetate catabolic process"/>
    <property type="evidence" value="ECO:0007669"/>
    <property type="project" value="TreeGrafter"/>
</dbReference>
<dbReference type="CDD" id="cd00751">
    <property type="entry name" value="thiolase"/>
    <property type="match status" value="1"/>
</dbReference>
<dbReference type="FunFam" id="3.40.47.10:FF:000010">
    <property type="entry name" value="Acetyl-CoA acetyltransferase (Thiolase)"/>
    <property type="match status" value="1"/>
</dbReference>
<dbReference type="Gene3D" id="3.40.47.10">
    <property type="match status" value="2"/>
</dbReference>
<dbReference type="HAMAP" id="MF_01620">
    <property type="entry name" value="FadA"/>
    <property type="match status" value="1"/>
</dbReference>
<dbReference type="InterPro" id="IPR012805">
    <property type="entry name" value="FadA"/>
</dbReference>
<dbReference type="InterPro" id="IPR002155">
    <property type="entry name" value="Thiolase"/>
</dbReference>
<dbReference type="InterPro" id="IPR016039">
    <property type="entry name" value="Thiolase-like"/>
</dbReference>
<dbReference type="InterPro" id="IPR050215">
    <property type="entry name" value="Thiolase-like_sf_Thiolase"/>
</dbReference>
<dbReference type="InterPro" id="IPR020615">
    <property type="entry name" value="Thiolase_acyl_enz_int_AS"/>
</dbReference>
<dbReference type="InterPro" id="IPR020610">
    <property type="entry name" value="Thiolase_AS"/>
</dbReference>
<dbReference type="InterPro" id="IPR020617">
    <property type="entry name" value="Thiolase_C"/>
</dbReference>
<dbReference type="InterPro" id="IPR020613">
    <property type="entry name" value="Thiolase_CS"/>
</dbReference>
<dbReference type="InterPro" id="IPR020616">
    <property type="entry name" value="Thiolase_N"/>
</dbReference>
<dbReference type="NCBIfam" id="TIGR01930">
    <property type="entry name" value="AcCoA-C-Actrans"/>
    <property type="match status" value="1"/>
</dbReference>
<dbReference type="NCBIfam" id="TIGR02445">
    <property type="entry name" value="fadA"/>
    <property type="match status" value="1"/>
</dbReference>
<dbReference type="NCBIfam" id="NF006510">
    <property type="entry name" value="PRK08947.1"/>
    <property type="match status" value="1"/>
</dbReference>
<dbReference type="PANTHER" id="PTHR43853:SF11">
    <property type="entry name" value="3-KETOACYL-COA THIOLASE FADA"/>
    <property type="match status" value="1"/>
</dbReference>
<dbReference type="PANTHER" id="PTHR43853">
    <property type="entry name" value="3-KETOACYL-COA THIOLASE, PEROXISOMAL"/>
    <property type="match status" value="1"/>
</dbReference>
<dbReference type="Pfam" id="PF02803">
    <property type="entry name" value="Thiolase_C"/>
    <property type="match status" value="1"/>
</dbReference>
<dbReference type="Pfam" id="PF00108">
    <property type="entry name" value="Thiolase_N"/>
    <property type="match status" value="1"/>
</dbReference>
<dbReference type="PIRSF" id="PIRSF000429">
    <property type="entry name" value="Ac-CoA_Ac_transf"/>
    <property type="match status" value="1"/>
</dbReference>
<dbReference type="SUPFAM" id="SSF53901">
    <property type="entry name" value="Thiolase-like"/>
    <property type="match status" value="2"/>
</dbReference>
<dbReference type="PROSITE" id="PS00098">
    <property type="entry name" value="THIOLASE_1"/>
    <property type="match status" value="1"/>
</dbReference>
<dbReference type="PROSITE" id="PS00737">
    <property type="entry name" value="THIOLASE_2"/>
    <property type="match status" value="1"/>
</dbReference>
<dbReference type="PROSITE" id="PS00099">
    <property type="entry name" value="THIOLASE_3"/>
    <property type="match status" value="1"/>
</dbReference>
<evidence type="ECO:0000255" key="1">
    <source>
        <dbReference type="HAMAP-Rule" id="MF_01620"/>
    </source>
</evidence>